<dbReference type="EC" id="2.7.11.1"/>
<dbReference type="EC" id="2.7.11.26"/>
<dbReference type="EMBL" id="AM040976">
    <property type="protein sequence ID" value="CAJ13860.1"/>
    <property type="molecule type" value="mRNA"/>
</dbReference>
<dbReference type="SMR" id="D3ZML2"/>
<dbReference type="FunCoup" id="D3ZML2">
    <property type="interactions" value="1768"/>
</dbReference>
<dbReference type="IntAct" id="D3ZML2">
    <property type="interactions" value="1"/>
</dbReference>
<dbReference type="STRING" id="10116.ENSRNOP00000027134"/>
<dbReference type="GlyGen" id="D3ZML2">
    <property type="glycosylation" value="1 site"/>
</dbReference>
<dbReference type="iPTMnet" id="D3ZML2"/>
<dbReference type="PhosphoSitePlus" id="D3ZML2"/>
<dbReference type="SwissPalm" id="D3ZML2"/>
<dbReference type="PaxDb" id="10116-ENSRNOP00000051751"/>
<dbReference type="Ensembl" id="ENSRNOT00000027134.7">
    <molecule id="D3ZML2-2"/>
    <property type="protein sequence ID" value="ENSRNOP00000027134.7"/>
    <property type="gene ID" value="ENSRNOG00000020021.9"/>
</dbReference>
<dbReference type="AGR" id="RGD:1566256"/>
<dbReference type="RGD" id="1566256">
    <property type="gene designation" value="Brsk2"/>
</dbReference>
<dbReference type="eggNOG" id="KOG0588">
    <property type="taxonomic scope" value="Eukaryota"/>
</dbReference>
<dbReference type="InParanoid" id="D3ZML2"/>
<dbReference type="PhylomeDB" id="D3ZML2"/>
<dbReference type="TreeFam" id="TF313967"/>
<dbReference type="PRO" id="PR:D3ZML2"/>
<dbReference type="Proteomes" id="UP000002494">
    <property type="component" value="Chromosome 1"/>
</dbReference>
<dbReference type="GO" id="GO:0005813">
    <property type="term" value="C:centrosome"/>
    <property type="evidence" value="ECO:0000266"/>
    <property type="project" value="RGD"/>
</dbReference>
<dbReference type="GO" id="GO:0005737">
    <property type="term" value="C:cytoplasm"/>
    <property type="evidence" value="ECO:0000250"/>
    <property type="project" value="UniProtKB"/>
</dbReference>
<dbReference type="GO" id="GO:0150034">
    <property type="term" value="C:distal axon"/>
    <property type="evidence" value="ECO:0000315"/>
    <property type="project" value="ARUK-UCL"/>
</dbReference>
<dbReference type="GO" id="GO:0005783">
    <property type="term" value="C:endoplasmic reticulum"/>
    <property type="evidence" value="ECO:0000266"/>
    <property type="project" value="RGD"/>
</dbReference>
<dbReference type="GO" id="GO:0005634">
    <property type="term" value="C:nucleus"/>
    <property type="evidence" value="ECO:0000250"/>
    <property type="project" value="UniProtKB"/>
</dbReference>
<dbReference type="GO" id="GO:0048471">
    <property type="term" value="C:perinuclear region of cytoplasm"/>
    <property type="evidence" value="ECO:0007669"/>
    <property type="project" value="UniProtKB-SubCell"/>
</dbReference>
<dbReference type="GO" id="GO:0005524">
    <property type="term" value="F:ATP binding"/>
    <property type="evidence" value="ECO:0000266"/>
    <property type="project" value="RGD"/>
</dbReference>
<dbReference type="GO" id="GO:0051117">
    <property type="term" value="F:ATPase binding"/>
    <property type="evidence" value="ECO:0000266"/>
    <property type="project" value="RGD"/>
</dbReference>
<dbReference type="GO" id="GO:0000287">
    <property type="term" value="F:magnesium ion binding"/>
    <property type="evidence" value="ECO:0000266"/>
    <property type="project" value="RGD"/>
</dbReference>
<dbReference type="GO" id="GO:0019901">
    <property type="term" value="F:protein kinase binding"/>
    <property type="evidence" value="ECO:0000266"/>
    <property type="project" value="RGD"/>
</dbReference>
<dbReference type="GO" id="GO:0106310">
    <property type="term" value="F:protein serine kinase activity"/>
    <property type="evidence" value="ECO:0007669"/>
    <property type="project" value="RHEA"/>
</dbReference>
<dbReference type="GO" id="GO:0004674">
    <property type="term" value="F:protein serine/threonine kinase activity"/>
    <property type="evidence" value="ECO:0000315"/>
    <property type="project" value="ARUK-UCL"/>
</dbReference>
<dbReference type="GO" id="GO:0050321">
    <property type="term" value="F:tau-protein kinase activity"/>
    <property type="evidence" value="ECO:0000250"/>
    <property type="project" value="UniProtKB"/>
</dbReference>
<dbReference type="GO" id="GO:0030036">
    <property type="term" value="P:actin cytoskeleton organization"/>
    <property type="evidence" value="ECO:0000266"/>
    <property type="project" value="RGD"/>
</dbReference>
<dbReference type="GO" id="GO:0007409">
    <property type="term" value="P:axonogenesis"/>
    <property type="evidence" value="ECO:0000250"/>
    <property type="project" value="UniProtKB"/>
</dbReference>
<dbReference type="GO" id="GO:0051301">
    <property type="term" value="P:cell division"/>
    <property type="evidence" value="ECO:0007669"/>
    <property type="project" value="UniProtKB-KW"/>
</dbReference>
<dbReference type="GO" id="GO:0006974">
    <property type="term" value="P:DNA damage response"/>
    <property type="evidence" value="ECO:0000250"/>
    <property type="project" value="UniProtKB"/>
</dbReference>
<dbReference type="GO" id="GO:0036503">
    <property type="term" value="P:ERAD pathway"/>
    <property type="evidence" value="ECO:0000266"/>
    <property type="project" value="RGD"/>
</dbReference>
<dbReference type="GO" id="GO:0030010">
    <property type="term" value="P:establishment of cell polarity"/>
    <property type="evidence" value="ECO:0000250"/>
    <property type="project" value="UniProtKB"/>
</dbReference>
<dbReference type="GO" id="GO:0006887">
    <property type="term" value="P:exocytosis"/>
    <property type="evidence" value="ECO:0007669"/>
    <property type="project" value="UniProtKB-KW"/>
</dbReference>
<dbReference type="GO" id="GO:0000086">
    <property type="term" value="P:G2/M transition of mitotic cell cycle"/>
    <property type="evidence" value="ECO:0000266"/>
    <property type="project" value="RGD"/>
</dbReference>
<dbReference type="GO" id="GO:0070059">
    <property type="term" value="P:intrinsic apoptotic signaling pathway in response to endoplasmic reticulum stress"/>
    <property type="evidence" value="ECO:0000266"/>
    <property type="project" value="RGD"/>
</dbReference>
<dbReference type="GO" id="GO:0090176">
    <property type="term" value="P:microtubule cytoskeleton organization involved in establishment of planar polarity"/>
    <property type="evidence" value="ECO:0000266"/>
    <property type="project" value="RGD"/>
</dbReference>
<dbReference type="GO" id="GO:0007095">
    <property type="term" value="P:mitotic G2 DNA damage checkpoint signaling"/>
    <property type="evidence" value="ECO:0000250"/>
    <property type="project" value="UniProtKB"/>
</dbReference>
<dbReference type="GO" id="GO:0030182">
    <property type="term" value="P:neuron differentiation"/>
    <property type="evidence" value="ECO:0000266"/>
    <property type="project" value="RGD"/>
</dbReference>
<dbReference type="GO" id="GO:0048812">
    <property type="term" value="P:neuron projection morphogenesis"/>
    <property type="evidence" value="ECO:0000266"/>
    <property type="project" value="RGD"/>
</dbReference>
<dbReference type="GO" id="GO:0006468">
    <property type="term" value="P:protein phosphorylation"/>
    <property type="evidence" value="ECO:0000250"/>
    <property type="project" value="UniProtKB"/>
</dbReference>
<dbReference type="GO" id="GO:0050770">
    <property type="term" value="P:regulation of axonogenesis"/>
    <property type="evidence" value="ECO:0000266"/>
    <property type="project" value="RGD"/>
</dbReference>
<dbReference type="GO" id="GO:0061178">
    <property type="term" value="P:regulation of insulin secretion involved in cellular response to glucose stimulus"/>
    <property type="evidence" value="ECO:0000266"/>
    <property type="project" value="RGD"/>
</dbReference>
<dbReference type="GO" id="GO:0010975">
    <property type="term" value="P:regulation of neuron projection development"/>
    <property type="evidence" value="ECO:0000266"/>
    <property type="project" value="RGD"/>
</dbReference>
<dbReference type="GO" id="GO:0009411">
    <property type="term" value="P:response to UV"/>
    <property type="evidence" value="ECO:0000250"/>
    <property type="project" value="UniProtKB"/>
</dbReference>
<dbReference type="CDD" id="cd14081">
    <property type="entry name" value="STKc_BRSK1_2"/>
    <property type="match status" value="1"/>
</dbReference>
<dbReference type="CDD" id="cd14340">
    <property type="entry name" value="UBA_BRSK"/>
    <property type="match status" value="1"/>
</dbReference>
<dbReference type="FunFam" id="1.10.510.10:FF:000064">
    <property type="entry name" value="BR serine/threonine-protein kinase 2"/>
    <property type="match status" value="1"/>
</dbReference>
<dbReference type="FunFam" id="3.30.200.20:FF:000003">
    <property type="entry name" value="Non-specific serine/threonine protein kinase"/>
    <property type="match status" value="1"/>
</dbReference>
<dbReference type="Gene3D" id="1.10.510.10">
    <property type="entry name" value="Transferase(Phosphotransferase) domain 1"/>
    <property type="match status" value="1"/>
</dbReference>
<dbReference type="InterPro" id="IPR048622">
    <property type="entry name" value="BRSK1_2-like_UBA"/>
</dbReference>
<dbReference type="InterPro" id="IPR011009">
    <property type="entry name" value="Kinase-like_dom_sf"/>
</dbReference>
<dbReference type="InterPro" id="IPR000719">
    <property type="entry name" value="Prot_kinase_dom"/>
</dbReference>
<dbReference type="InterPro" id="IPR017441">
    <property type="entry name" value="Protein_kinase_ATP_BS"/>
</dbReference>
<dbReference type="InterPro" id="IPR008271">
    <property type="entry name" value="Ser/Thr_kinase_AS"/>
</dbReference>
<dbReference type="PANTHER" id="PTHR24346:SF108">
    <property type="entry name" value="BR SERINE_THREONINE KINASE 1"/>
    <property type="match status" value="1"/>
</dbReference>
<dbReference type="PANTHER" id="PTHR24346">
    <property type="entry name" value="MAP/MICROTUBULE AFFINITY-REGULATING KINASE"/>
    <property type="match status" value="1"/>
</dbReference>
<dbReference type="Pfam" id="PF21122">
    <property type="entry name" value="KA1_BRSK"/>
    <property type="match status" value="1"/>
</dbReference>
<dbReference type="Pfam" id="PF00069">
    <property type="entry name" value="Pkinase"/>
    <property type="match status" value="1"/>
</dbReference>
<dbReference type="Pfam" id="PF21115">
    <property type="entry name" value="UBA_BRSK"/>
    <property type="match status" value="1"/>
</dbReference>
<dbReference type="SMART" id="SM00220">
    <property type="entry name" value="S_TKc"/>
    <property type="match status" value="1"/>
</dbReference>
<dbReference type="SUPFAM" id="SSF56112">
    <property type="entry name" value="Protein kinase-like (PK-like)"/>
    <property type="match status" value="1"/>
</dbReference>
<dbReference type="PROSITE" id="PS00107">
    <property type="entry name" value="PROTEIN_KINASE_ATP"/>
    <property type="match status" value="1"/>
</dbReference>
<dbReference type="PROSITE" id="PS50011">
    <property type="entry name" value="PROTEIN_KINASE_DOM"/>
    <property type="match status" value="1"/>
</dbReference>
<dbReference type="PROSITE" id="PS00108">
    <property type="entry name" value="PROTEIN_KINASE_ST"/>
    <property type="match status" value="1"/>
</dbReference>
<gene>
    <name type="primary">Brsk2</name>
    <name type="synonym">Sada</name>
</gene>
<sequence length="735" mass="81455">MTSTGKDGGGAQHAQYVGPYRLEKTLGKGQTGLVKLGIHCVTCQKVAIKIVNREKLSESVLMKVEREIAILKLIEHPHVLKLHDVYENKKYLYLVLEHVSGGELFDYLVKKGRLTPKEARKFFRQIISALDFCHSHSICHRDLKPENLLLDERNNIRIADFGMASLQVGDSLLETSCGSPHYACPEVIRGEKYDGRKADVWSCGVILFALLVGALPFDDDNLRQLLEKVKRGVFHMPHFIPPDCQSLLRGMIEVDAARRLTLEHIQKHIWYIGGKNEPEPEQPIPRKVQIRSLPSLEDIDPDVLDSMHSLGCFRDRNKLLQDLLSEEENQEKMIYFLLLDRKERYPSHEDEDLPPRNEIDPPRKRVDSPMLNRHGKRRPERKSMEVLSVTDGGSPVPARRAIEMAQHGQRSRSISGASSGLSTSPLSSPRVTPHPSPRGSPLPTPKGTPVHTPKESPAGTPNPTPPSSPSVGGVPWRTRLNSIKNSFLGSPRFHRRKLQVPTPEEMSNLTPESSPELGHLQLFGNPVSKVRSVAMELVILVQTLAYTSFRLLGTFLPVRYLRHSVLSRPPERARLVLRGAPCTHMGPVWNMVGMAYTQNPPIMGETGVYGSQWVMSSAPSKHYTSLGLSVPSPSCSLSPSLFPFCAPDTTNCMEVMTGRLSKCGTPLSNFFDVIKQLFSDEKNGQAAQAPSTPAKRSAHGPLGDSAAAGPGGDTEYPMGKDMAKMGPPAARREQP</sequence>
<keyword id="KW-0025">Alternative splicing</keyword>
<keyword id="KW-0053">Apoptosis</keyword>
<keyword id="KW-0067">ATP-binding</keyword>
<keyword id="KW-0131">Cell cycle</keyword>
<keyword id="KW-0132">Cell division</keyword>
<keyword id="KW-0963">Cytoplasm</keyword>
<keyword id="KW-0206">Cytoskeleton</keyword>
<keyword id="KW-0256">Endoplasmic reticulum</keyword>
<keyword id="KW-0268">Exocytosis</keyword>
<keyword id="KW-0418">Kinase</keyword>
<keyword id="KW-0460">Magnesium</keyword>
<keyword id="KW-0479">Metal-binding</keyword>
<keyword id="KW-0498">Mitosis</keyword>
<keyword id="KW-0524">Neurogenesis</keyword>
<keyword id="KW-0547">Nucleotide-binding</keyword>
<keyword id="KW-0597">Phosphoprotein</keyword>
<keyword id="KW-1185">Reference proteome</keyword>
<keyword id="KW-0723">Serine/threonine-protein kinase</keyword>
<keyword id="KW-0808">Transferase</keyword>
<keyword id="KW-0832">Ubl conjugation</keyword>
<reference key="1">
    <citation type="journal article" date="2004" name="Nature">
        <title>Genome sequence of the Brown Norway rat yields insights into mammalian evolution.</title>
        <authorList>
            <person name="Gibbs R.A."/>
            <person name="Weinstock G.M."/>
            <person name="Metzker M.L."/>
            <person name="Muzny D.M."/>
            <person name="Sodergren E.J."/>
            <person name="Scherer S."/>
            <person name="Scott G."/>
            <person name="Steffen D."/>
            <person name="Worley K.C."/>
            <person name="Burch P.E."/>
            <person name="Okwuonu G."/>
            <person name="Hines S."/>
            <person name="Lewis L."/>
            <person name="Deramo C."/>
            <person name="Delgado O."/>
            <person name="Dugan-Rocha S."/>
            <person name="Miner G."/>
            <person name="Morgan M."/>
            <person name="Hawes A."/>
            <person name="Gill R."/>
            <person name="Holt R.A."/>
            <person name="Adams M.D."/>
            <person name="Amanatides P.G."/>
            <person name="Baden-Tillson H."/>
            <person name="Barnstead M."/>
            <person name="Chin S."/>
            <person name="Evans C.A."/>
            <person name="Ferriera S."/>
            <person name="Fosler C."/>
            <person name="Glodek A."/>
            <person name="Gu Z."/>
            <person name="Jennings D."/>
            <person name="Kraft C.L."/>
            <person name="Nguyen T."/>
            <person name="Pfannkoch C.M."/>
            <person name="Sitter C."/>
            <person name="Sutton G.G."/>
            <person name="Venter J.C."/>
            <person name="Woodage T."/>
            <person name="Smith D."/>
            <person name="Lee H.-M."/>
            <person name="Gustafson E."/>
            <person name="Cahill P."/>
            <person name="Kana A."/>
            <person name="Doucette-Stamm L."/>
            <person name="Weinstock K."/>
            <person name="Fechtel K."/>
            <person name="Weiss R.B."/>
            <person name="Dunn D.M."/>
            <person name="Green E.D."/>
            <person name="Blakesley R.W."/>
            <person name="Bouffard G.G."/>
            <person name="De Jong P.J."/>
            <person name="Osoegawa K."/>
            <person name="Zhu B."/>
            <person name="Marra M."/>
            <person name="Schein J."/>
            <person name="Bosdet I."/>
            <person name="Fjell C."/>
            <person name="Jones S."/>
            <person name="Krzywinski M."/>
            <person name="Mathewson C."/>
            <person name="Siddiqui A."/>
            <person name="Wye N."/>
            <person name="McPherson J."/>
            <person name="Zhao S."/>
            <person name="Fraser C.M."/>
            <person name="Shetty J."/>
            <person name="Shatsman S."/>
            <person name="Geer K."/>
            <person name="Chen Y."/>
            <person name="Abramzon S."/>
            <person name="Nierman W.C."/>
            <person name="Havlak P.H."/>
            <person name="Chen R."/>
            <person name="Durbin K.J."/>
            <person name="Egan A."/>
            <person name="Ren Y."/>
            <person name="Song X.-Z."/>
            <person name="Li B."/>
            <person name="Liu Y."/>
            <person name="Qin X."/>
            <person name="Cawley S."/>
            <person name="Cooney A.J."/>
            <person name="D'Souza L.M."/>
            <person name="Martin K."/>
            <person name="Wu J.Q."/>
            <person name="Gonzalez-Garay M.L."/>
            <person name="Jackson A.R."/>
            <person name="Kalafus K.J."/>
            <person name="McLeod M.P."/>
            <person name="Milosavljevic A."/>
            <person name="Virk D."/>
            <person name="Volkov A."/>
            <person name="Wheeler D.A."/>
            <person name="Zhang Z."/>
            <person name="Bailey J.A."/>
            <person name="Eichler E.E."/>
            <person name="Tuzun E."/>
            <person name="Birney E."/>
            <person name="Mongin E."/>
            <person name="Ureta-Vidal A."/>
            <person name="Woodwark C."/>
            <person name="Zdobnov E."/>
            <person name="Bork P."/>
            <person name="Suyama M."/>
            <person name="Torrents D."/>
            <person name="Alexandersson M."/>
            <person name="Trask B.J."/>
            <person name="Young J.M."/>
            <person name="Huang H."/>
            <person name="Wang H."/>
            <person name="Xing H."/>
            <person name="Daniels S."/>
            <person name="Gietzen D."/>
            <person name="Schmidt J."/>
            <person name="Stevens K."/>
            <person name="Vitt U."/>
            <person name="Wingrove J."/>
            <person name="Camara F."/>
            <person name="Mar Alba M."/>
            <person name="Abril J.F."/>
            <person name="Guigo R."/>
            <person name="Smit A."/>
            <person name="Dubchak I."/>
            <person name="Rubin E.M."/>
            <person name="Couronne O."/>
            <person name="Poliakov A."/>
            <person name="Huebner N."/>
            <person name="Ganten D."/>
            <person name="Goesele C."/>
            <person name="Hummel O."/>
            <person name="Kreitler T."/>
            <person name="Lee Y.-A."/>
            <person name="Monti J."/>
            <person name="Schulz H."/>
            <person name="Zimdahl H."/>
            <person name="Himmelbauer H."/>
            <person name="Lehrach H."/>
            <person name="Jacob H.J."/>
            <person name="Bromberg S."/>
            <person name="Gullings-Handley J."/>
            <person name="Jensen-Seaman M.I."/>
            <person name="Kwitek A.E."/>
            <person name="Lazar J."/>
            <person name="Pasko D."/>
            <person name="Tonellato P.J."/>
            <person name="Twigger S."/>
            <person name="Ponting C.P."/>
            <person name="Duarte J.M."/>
            <person name="Rice S."/>
            <person name="Goodstadt L."/>
            <person name="Beatson S.A."/>
            <person name="Emes R.D."/>
            <person name="Winter E.E."/>
            <person name="Webber C."/>
            <person name="Brandt P."/>
            <person name="Nyakatura G."/>
            <person name="Adetobi M."/>
            <person name="Chiaromonte F."/>
            <person name="Elnitski L."/>
            <person name="Eswara P."/>
            <person name="Hardison R.C."/>
            <person name="Hou M."/>
            <person name="Kolbe D."/>
            <person name="Makova K."/>
            <person name="Miller W."/>
            <person name="Nekrutenko A."/>
            <person name="Riemer C."/>
            <person name="Schwartz S."/>
            <person name="Taylor J."/>
            <person name="Yang S."/>
            <person name="Zhang Y."/>
            <person name="Lindpaintner K."/>
            <person name="Andrews T.D."/>
            <person name="Caccamo M."/>
            <person name="Clamp M."/>
            <person name="Clarke L."/>
            <person name="Curwen V."/>
            <person name="Durbin R.M."/>
            <person name="Eyras E."/>
            <person name="Searle S.M."/>
            <person name="Cooper G.M."/>
            <person name="Batzoglou S."/>
            <person name="Brudno M."/>
            <person name="Sidow A."/>
            <person name="Stone E.A."/>
            <person name="Payseur B.A."/>
            <person name="Bourque G."/>
            <person name="Lopez-Otin C."/>
            <person name="Puente X.S."/>
            <person name="Chakrabarti K."/>
            <person name="Chatterji S."/>
            <person name="Dewey C."/>
            <person name="Pachter L."/>
            <person name="Bray N."/>
            <person name="Yap V.B."/>
            <person name="Caspi A."/>
            <person name="Tesler G."/>
            <person name="Pevzner P.A."/>
            <person name="Haussler D."/>
            <person name="Roskin K.M."/>
            <person name="Baertsch R."/>
            <person name="Clawson H."/>
            <person name="Furey T.S."/>
            <person name="Hinrichs A.S."/>
            <person name="Karolchik D."/>
            <person name="Kent W.J."/>
            <person name="Rosenbloom K.R."/>
            <person name="Trumbower H."/>
            <person name="Weirauch M."/>
            <person name="Cooper D.N."/>
            <person name="Stenson P.D."/>
            <person name="Ma B."/>
            <person name="Brent M."/>
            <person name="Arumugam M."/>
            <person name="Shteynberg D."/>
            <person name="Copley R.R."/>
            <person name="Taylor M.S."/>
            <person name="Riethman H."/>
            <person name="Mudunuri U."/>
            <person name="Peterson J."/>
            <person name="Guyer M."/>
            <person name="Felsenfeld A."/>
            <person name="Old S."/>
            <person name="Mockrin S."/>
            <person name="Collins F.S."/>
        </authorList>
    </citation>
    <scope>NUCLEOTIDE SEQUENCE [LARGE SCALE GENOMIC DNA]</scope>
    <source>
        <strain>Brown Norway</strain>
    </source>
</reference>
<reference key="2">
    <citation type="submission" date="2005-06" db="EMBL/GenBank/DDBJ databases">
        <title>BR serine/threonine Kinase 2: a new autoantigen in paraneoplastic limbic encephalitis.</title>
        <authorList>
            <person name="Sabater L."/>
            <person name="Gomez-Choco M."/>
            <person name="Saiz A."/>
            <person name="Graus F."/>
        </authorList>
    </citation>
    <scope>NUCLEOTIDE SEQUENCE [MRNA] OF 1-457 (ISOFORM 2)</scope>
    <source>
        <strain>Sprague-Dawley</strain>
        <tissue>Hippocampus</tissue>
    </source>
</reference>
<reference key="3">
    <citation type="journal article" date="2008" name="Genes Dev.">
        <title>Tuberous sclerosis complex proteins control axon formation.</title>
        <authorList>
            <person name="Choi Y.J."/>
            <person name="Di Nardo A."/>
            <person name="Kramvis I."/>
            <person name="Meikle L."/>
            <person name="Kwiatkowski D.J."/>
            <person name="Sahin M."/>
            <person name="He X."/>
        </authorList>
    </citation>
    <scope>REGULATION OF TRANSLATION</scope>
</reference>
<reference key="4">
    <citation type="journal article" date="2012" name="Nat. Commun.">
        <title>Quantitative maps of protein phosphorylation sites across 14 different rat organs and tissues.</title>
        <authorList>
            <person name="Lundby A."/>
            <person name="Secher A."/>
            <person name="Lage K."/>
            <person name="Nordsborg N.B."/>
            <person name="Dmytriyev A."/>
            <person name="Lundby C."/>
            <person name="Olsen J.V."/>
        </authorList>
    </citation>
    <scope>PHOSPHORYLATION [LARGE SCALE ANALYSIS] AT SER-295; SER-383; SER-394; SER-424; SER-428 AND SER-456</scope>
    <scope>PHOSPHORYLATION [LARGE SCALE ANALYSIS] AT SER-417 (ISOFORM 2)</scope>
    <scope>IDENTIFICATION BY MASS SPECTROMETRY [LARGE SCALE ANALYSIS]</scope>
</reference>
<name>BRSK2_RAT</name>
<proteinExistence type="evidence at protein level"/>
<protein>
    <recommendedName>
        <fullName>Serine/threonine-protein kinase BRSK2</fullName>
        <ecNumber>2.7.11.1</ecNumber>
        <ecNumber>2.7.11.26</ecNumber>
    </recommendedName>
    <alternativeName>
        <fullName>Brain-specific serine/threonine-protein kinase 2</fullName>
        <shortName>BR serine/threonine-protein kinase 2</shortName>
    </alternativeName>
    <alternativeName>
        <fullName>Serine/threonine-protein kinase SAD-A</fullName>
    </alternativeName>
</protein>
<evidence type="ECO:0000250" key="1"/>
<evidence type="ECO:0000250" key="2">
    <source>
        <dbReference type="UniProtKB" id="Q69Z98"/>
    </source>
</evidence>
<evidence type="ECO:0000250" key="3">
    <source>
        <dbReference type="UniProtKB" id="Q8IWQ3"/>
    </source>
</evidence>
<evidence type="ECO:0000255" key="4">
    <source>
        <dbReference type="PROSITE-ProRule" id="PRU00159"/>
    </source>
</evidence>
<evidence type="ECO:0000255" key="5">
    <source>
        <dbReference type="PROSITE-ProRule" id="PRU10027"/>
    </source>
</evidence>
<evidence type="ECO:0000256" key="6">
    <source>
        <dbReference type="SAM" id="MobiDB-lite"/>
    </source>
</evidence>
<evidence type="ECO:0000303" key="7">
    <source ref="2"/>
</evidence>
<evidence type="ECO:0000305" key="8"/>
<evidence type="ECO:0000305" key="9">
    <source>
    </source>
</evidence>
<evidence type="ECO:0007744" key="10">
    <source>
    </source>
</evidence>
<accession>D3ZML2</accession>
<accession>E9PTC7</accession>
<accession>Q4A1P4</accession>
<organism>
    <name type="scientific">Rattus norvegicus</name>
    <name type="common">Rat</name>
    <dbReference type="NCBI Taxonomy" id="10116"/>
    <lineage>
        <taxon>Eukaryota</taxon>
        <taxon>Metazoa</taxon>
        <taxon>Chordata</taxon>
        <taxon>Craniata</taxon>
        <taxon>Vertebrata</taxon>
        <taxon>Euteleostomi</taxon>
        <taxon>Mammalia</taxon>
        <taxon>Eutheria</taxon>
        <taxon>Euarchontoglires</taxon>
        <taxon>Glires</taxon>
        <taxon>Rodentia</taxon>
        <taxon>Myomorpha</taxon>
        <taxon>Muroidea</taxon>
        <taxon>Muridae</taxon>
        <taxon>Murinae</taxon>
        <taxon>Rattus</taxon>
    </lineage>
</organism>
<comment type="function">
    <text evidence="1">Serine/threonine-protein kinase that plays a key role in polarization of neurons and axonogenesis, cell cycle progress and insulin secretion. Phosphorylates CDK16, CDC25C, MAPT/TAU, PAK1 and WEE1. Following phosphorylation and activation by STK11/LKB1, acts as a key regulator of polarization of cortical neurons, probably by mediating phosphorylation of microtubule-associated proteins such as MAPT/TAU at 'Thr-523' and 'Ser-573'. Also regulates neuron polarization by mediating phosphorylation of WEE1 at 'Ser-642' in post-mitotic neurons, leading to down-regulate WEE1 activity in polarized neurons. Plays a role in the regulation of the mitotic cell cycle progress and the onset of mitosis. Plays a role in the regulation of insulin secretion in response to elevated glucose levels, probably via phosphorylation of CDK16 and PAK1. While BRSK2 phosphorylated at Thr-175 can inhibit insulin secretion, BRSK2 phosphorylated at Thr-261 can promote insulin secretion. Regulates reorganization of the actin cytoskeleton. May play a role in the apoptotic response triggered by endoplasmic reticulum (ER) stress (By similarity).</text>
</comment>
<comment type="catalytic activity">
    <reaction>
        <text>L-seryl-[protein] + ATP = O-phospho-L-seryl-[protein] + ADP + H(+)</text>
        <dbReference type="Rhea" id="RHEA:17989"/>
        <dbReference type="Rhea" id="RHEA-COMP:9863"/>
        <dbReference type="Rhea" id="RHEA-COMP:11604"/>
        <dbReference type="ChEBI" id="CHEBI:15378"/>
        <dbReference type="ChEBI" id="CHEBI:29999"/>
        <dbReference type="ChEBI" id="CHEBI:30616"/>
        <dbReference type="ChEBI" id="CHEBI:83421"/>
        <dbReference type="ChEBI" id="CHEBI:456216"/>
        <dbReference type="EC" id="2.7.11.1"/>
    </reaction>
</comment>
<comment type="catalytic activity">
    <reaction>
        <text>L-threonyl-[protein] + ATP = O-phospho-L-threonyl-[protein] + ADP + H(+)</text>
        <dbReference type="Rhea" id="RHEA:46608"/>
        <dbReference type="Rhea" id="RHEA-COMP:11060"/>
        <dbReference type="Rhea" id="RHEA-COMP:11605"/>
        <dbReference type="ChEBI" id="CHEBI:15378"/>
        <dbReference type="ChEBI" id="CHEBI:30013"/>
        <dbReference type="ChEBI" id="CHEBI:30616"/>
        <dbReference type="ChEBI" id="CHEBI:61977"/>
        <dbReference type="ChEBI" id="CHEBI:456216"/>
        <dbReference type="EC" id="2.7.11.1"/>
    </reaction>
</comment>
<comment type="catalytic activity">
    <reaction>
        <text>L-seryl-[tau protein] + ATP = O-phospho-L-seryl-[tau protein] + ADP + H(+)</text>
        <dbReference type="Rhea" id="RHEA:12801"/>
        <dbReference type="Rhea" id="RHEA-COMP:13701"/>
        <dbReference type="Rhea" id="RHEA-COMP:13702"/>
        <dbReference type="ChEBI" id="CHEBI:15378"/>
        <dbReference type="ChEBI" id="CHEBI:29999"/>
        <dbReference type="ChEBI" id="CHEBI:30616"/>
        <dbReference type="ChEBI" id="CHEBI:83421"/>
        <dbReference type="ChEBI" id="CHEBI:456216"/>
        <dbReference type="EC" id="2.7.11.26"/>
    </reaction>
</comment>
<comment type="catalytic activity">
    <reaction>
        <text>L-threonyl-[tau protein] + ATP = O-phospho-L-threonyl-[tau protein] + ADP + H(+)</text>
        <dbReference type="Rhea" id="RHEA:53904"/>
        <dbReference type="Rhea" id="RHEA-COMP:13703"/>
        <dbReference type="Rhea" id="RHEA-COMP:13704"/>
        <dbReference type="ChEBI" id="CHEBI:15378"/>
        <dbReference type="ChEBI" id="CHEBI:30013"/>
        <dbReference type="ChEBI" id="CHEBI:30616"/>
        <dbReference type="ChEBI" id="CHEBI:61977"/>
        <dbReference type="ChEBI" id="CHEBI:456216"/>
        <dbReference type="EC" id="2.7.11.26"/>
    </reaction>
</comment>
<comment type="cofactor">
    <cofactor evidence="1">
        <name>Mg(2+)</name>
        <dbReference type="ChEBI" id="CHEBI:18420"/>
    </cofactor>
</comment>
<comment type="activity regulation">
    <text evidence="1">Activated by phosphorylation on Thr-175 by STK11/LKB1.</text>
</comment>
<comment type="subunit">
    <text evidence="1">Interacts with FZR1, a regulatory subunit of the APC ubiquitin ligase complex. Interacts with COPS5. Interacts with PAK1 (By similarity).</text>
</comment>
<comment type="subcellular location">
    <subcellularLocation>
        <location evidence="1">Cytoplasm</location>
        <location evidence="1">Cytoskeleton</location>
        <location evidence="1">Microtubule organizing center</location>
        <location evidence="1">Centrosome</location>
    </subcellularLocation>
    <subcellularLocation>
        <location evidence="1">Cytoplasm</location>
        <location evidence="1">Perinuclear region</location>
    </subcellularLocation>
    <subcellularLocation>
        <location evidence="1">Endoplasmic reticulum</location>
    </subcellularLocation>
    <text evidence="1">Detected at centrosomes during mitosis. Localizes to the endoplasmic reticulum in response to stress caused by tunicamycin (By similarity).</text>
</comment>
<comment type="alternative products">
    <event type="alternative splicing"/>
    <isoform>
        <id>D3ZML2-1</id>
        <name>1</name>
        <sequence type="displayed"/>
    </isoform>
    <isoform>
        <id>D3ZML2-2</id>
        <name>2</name>
        <sequence type="described" ref="VSP_041747"/>
    </isoform>
</comment>
<comment type="PTM">
    <text evidence="1">May be phosphorylated at Thr-261 by PKA (By similarity). Phosphorylated at Thr-175 by STK11/LKB1 in complex with STE20-related adapter-alpha (STRADA) pseudo kinase and CAB39. Not phosphorylated at Thr-175 by CaMKK2. In contrast, it is phosphorylated and activated by CaMKK1. May be inactivated via dephosphorylation of Thr-175 by PP2C (By similarity).</text>
</comment>
<comment type="PTM">
    <text evidence="1">Polyubiquitinated by the APC complex in conjunction with FZR1, leading to its proteasomal degradation. Targeted for proteasomal degradation by interaction with COPS5. BRSK2 levels change during the cell cycle. BRSK2 levels are low at the G1/S boundary and gradually increase as cells progress into G2 phase. BRSK2 levels decrease rapidly at the end of mitosis (By similarity).</text>
</comment>
<comment type="miscellaneous">
    <text evidence="9">Protein synthesis is inhibited by the TSC1-TSC2 complex acting through TORC1 in neurons, leading to regulate neuron polarization.</text>
</comment>
<comment type="similarity">
    <text evidence="8">Belongs to the protein kinase superfamily. CAMK Ser/Thr protein kinase family. SNF1 subfamily.</text>
</comment>
<feature type="chain" id="PRO_0000412650" description="Serine/threonine-protein kinase BRSK2">
    <location>
        <begin position="1"/>
        <end position="735"/>
    </location>
</feature>
<feature type="domain" description="Protein kinase" evidence="4">
    <location>
        <begin position="20"/>
        <end position="271"/>
    </location>
</feature>
<feature type="domain" description="UBA">
    <location>
        <begin position="298"/>
        <end position="340"/>
    </location>
</feature>
<feature type="region of interest" description="Disordered" evidence="6">
    <location>
        <begin position="346"/>
        <end position="476"/>
    </location>
</feature>
<feature type="region of interest" description="Disordered" evidence="6">
    <location>
        <begin position="493"/>
        <end position="514"/>
    </location>
</feature>
<feature type="region of interest" description="Disordered" evidence="6">
    <location>
        <begin position="682"/>
        <end position="735"/>
    </location>
</feature>
<feature type="compositionally biased region" description="Basic and acidic residues" evidence="6">
    <location>
        <begin position="346"/>
        <end position="367"/>
    </location>
</feature>
<feature type="compositionally biased region" description="Low complexity" evidence="6">
    <location>
        <begin position="411"/>
        <end position="429"/>
    </location>
</feature>
<feature type="compositionally biased region" description="Pro residues" evidence="6">
    <location>
        <begin position="432"/>
        <end position="446"/>
    </location>
</feature>
<feature type="active site" description="Proton acceptor" evidence="4 5">
    <location>
        <position position="142"/>
    </location>
</feature>
<feature type="binding site" evidence="4">
    <location>
        <begin position="26"/>
        <end position="34"/>
    </location>
    <ligand>
        <name>ATP</name>
        <dbReference type="ChEBI" id="CHEBI:30616"/>
    </ligand>
</feature>
<feature type="binding site" evidence="4">
    <location>
        <position position="49"/>
    </location>
    <ligand>
        <name>ATP</name>
        <dbReference type="ChEBI" id="CHEBI:30616"/>
    </ligand>
</feature>
<feature type="modified residue" description="Phosphothreonine; by LKB1" evidence="3">
    <location>
        <position position="175"/>
    </location>
</feature>
<feature type="modified residue" description="Phosphothreonine; by PKA" evidence="3">
    <location>
        <position position="261"/>
    </location>
</feature>
<feature type="modified residue" description="Phosphoserine" evidence="10">
    <location>
        <position position="295"/>
    </location>
</feature>
<feature type="modified residue" description="Phosphoserine" evidence="3">
    <location>
        <position position="368"/>
    </location>
</feature>
<feature type="modified residue" description="Phosphoserine" evidence="10">
    <location>
        <position position="383"/>
    </location>
</feature>
<feature type="modified residue" description="Phosphoserine" evidence="10">
    <location>
        <position position="394"/>
    </location>
</feature>
<feature type="modified residue" description="Phosphoserine" evidence="3">
    <location>
        <position position="413"/>
    </location>
</feature>
<feature type="modified residue" description="Phosphoserine" evidence="10">
    <location>
        <position position="424"/>
    </location>
</feature>
<feature type="modified residue" description="Phosphoserine" evidence="10">
    <location>
        <position position="428"/>
    </location>
</feature>
<feature type="modified residue" description="Phosphoserine" evidence="10">
    <location>
        <position position="456"/>
    </location>
</feature>
<feature type="modified residue" description="Phosphothreonine" evidence="2">
    <location>
        <position position="460"/>
    </location>
</feature>
<feature type="modified residue" description="Phosphothreonine" evidence="2">
    <location>
        <position position="464"/>
    </location>
</feature>
<feature type="modified residue" description="Phosphothreonine" evidence="3">
    <location>
        <position position="510"/>
    </location>
</feature>
<feature type="modified residue" description="Phosphoserine" evidence="2">
    <location>
        <position position="513"/>
    </location>
</feature>
<feature type="modified residue" description="Phosphoserine" evidence="2">
    <location>
        <position position="514"/>
    </location>
</feature>
<feature type="splice variant" id="VSP_041747" description="In isoform 2." evidence="7">
    <original>Q</original>
    <variation>QSKAVFSKSLDIAEAHPQFSKED</variation>
    <location>
        <position position="409"/>
    </location>
</feature>
<feature type="sequence conflict" description="In Ref. 2; CAJ13860." evidence="8" ref="2">
    <original>S</original>
    <variation>C</variation>
    <location>
        <position position="383"/>
    </location>
</feature>
<feature type="modified residue" description="Phosphoserine" evidence="10">
    <location sequence="D3ZML2-2">
        <position position="417"/>
    </location>
</feature>